<reference key="1">
    <citation type="journal article" date="2008" name="BMC Genomics">
        <title>Complete genome of Phenylobacterium zucineum - a novel facultative intracellular bacterium isolated from human erythroleukemia cell line K562.</title>
        <authorList>
            <person name="Luo Y."/>
            <person name="Xu X."/>
            <person name="Ding Z."/>
            <person name="Liu Z."/>
            <person name="Zhang B."/>
            <person name="Yan Z."/>
            <person name="Sun J."/>
            <person name="Hu S."/>
            <person name="Hu X."/>
        </authorList>
    </citation>
    <scope>NUCLEOTIDE SEQUENCE [LARGE SCALE GENOMIC DNA]</scope>
    <source>
        <strain>HLK1</strain>
    </source>
</reference>
<keyword id="KW-0066">ATP synthesis</keyword>
<keyword id="KW-0997">Cell inner membrane</keyword>
<keyword id="KW-1003">Cell membrane</keyword>
<keyword id="KW-0139">CF(1)</keyword>
<keyword id="KW-0375">Hydrogen ion transport</keyword>
<keyword id="KW-0406">Ion transport</keyword>
<keyword id="KW-0472">Membrane</keyword>
<keyword id="KW-1185">Reference proteome</keyword>
<keyword id="KW-0813">Transport</keyword>
<accession>B4RD44</accession>
<evidence type="ECO:0000255" key="1">
    <source>
        <dbReference type="HAMAP-Rule" id="MF_01416"/>
    </source>
</evidence>
<organism>
    <name type="scientific">Phenylobacterium zucineum (strain HLK1)</name>
    <dbReference type="NCBI Taxonomy" id="450851"/>
    <lineage>
        <taxon>Bacteria</taxon>
        <taxon>Pseudomonadati</taxon>
        <taxon>Pseudomonadota</taxon>
        <taxon>Alphaproteobacteria</taxon>
        <taxon>Caulobacterales</taxon>
        <taxon>Caulobacteraceae</taxon>
        <taxon>Phenylobacterium</taxon>
    </lineage>
</organism>
<protein>
    <recommendedName>
        <fullName evidence="1">ATP synthase subunit delta</fullName>
    </recommendedName>
    <alternativeName>
        <fullName evidence="1">ATP synthase F(1) sector subunit delta</fullName>
    </alternativeName>
    <alternativeName>
        <fullName evidence="1">F-type ATPase subunit delta</fullName>
        <shortName evidence="1">F-ATPase subunit delta</shortName>
    </alternativeName>
</protein>
<sequence length="184" mass="19261">MADDSKSSNVGSRYAQALFDLASEQKEVPAVEADLKSLKAAIADSRDLRVLLASPAFGADDKRKGLSAIADKAKFKPTTKKFLGLLAANGRAAALPEVISAFERLAAEARGAVSAEVTTALPLSSAQAKGLAQALRQALGKDPEITTRVDPALLGGIKVKVGSRLFDASLRSKLDSLKFALKRA</sequence>
<comment type="function">
    <text evidence="1">F(1)F(0) ATP synthase produces ATP from ADP in the presence of a proton or sodium gradient. F-type ATPases consist of two structural domains, F(1) containing the extramembraneous catalytic core and F(0) containing the membrane proton channel, linked together by a central stalk and a peripheral stalk. During catalysis, ATP synthesis in the catalytic domain of F(1) is coupled via a rotary mechanism of the central stalk subunits to proton translocation.</text>
</comment>
<comment type="function">
    <text evidence="1">This protein is part of the stalk that links CF(0) to CF(1). It either transmits conformational changes from CF(0) to CF(1) or is implicated in proton conduction.</text>
</comment>
<comment type="subunit">
    <text evidence="1">F-type ATPases have 2 components, F(1) - the catalytic core - and F(0) - the membrane proton channel. F(1) has five subunits: alpha(3), beta(3), gamma(1), delta(1), epsilon(1). F(0) has three main subunits: a(1), b(2) and c(10-14). The alpha and beta chains form an alternating ring which encloses part of the gamma chain. F(1) is attached to F(0) by a central stalk formed by the gamma and epsilon chains, while a peripheral stalk is formed by the delta and b chains.</text>
</comment>
<comment type="subcellular location">
    <subcellularLocation>
        <location evidence="1">Cell inner membrane</location>
        <topology evidence="1">Peripheral membrane protein</topology>
    </subcellularLocation>
</comment>
<comment type="similarity">
    <text evidence="1">Belongs to the ATPase delta chain family.</text>
</comment>
<gene>
    <name evidence="1" type="primary">atpH</name>
    <name type="ordered locus">PHZ_c0234</name>
</gene>
<feature type="chain" id="PRO_0000371053" description="ATP synthase subunit delta">
    <location>
        <begin position="1"/>
        <end position="184"/>
    </location>
</feature>
<proteinExistence type="inferred from homology"/>
<dbReference type="EMBL" id="CP000747">
    <property type="protein sequence ID" value="ACG76648.1"/>
    <property type="molecule type" value="Genomic_DNA"/>
</dbReference>
<dbReference type="RefSeq" id="WP_012520796.1">
    <property type="nucleotide sequence ID" value="NC_011144.1"/>
</dbReference>
<dbReference type="SMR" id="B4RD44"/>
<dbReference type="STRING" id="450851.PHZ_c0234"/>
<dbReference type="KEGG" id="pzu:PHZ_c0234"/>
<dbReference type="eggNOG" id="COG0712">
    <property type="taxonomic scope" value="Bacteria"/>
</dbReference>
<dbReference type="HOGENOM" id="CLU_085114_0_1_5"/>
<dbReference type="OrthoDB" id="9796185at2"/>
<dbReference type="Proteomes" id="UP000001868">
    <property type="component" value="Chromosome"/>
</dbReference>
<dbReference type="GO" id="GO:0005886">
    <property type="term" value="C:plasma membrane"/>
    <property type="evidence" value="ECO:0007669"/>
    <property type="project" value="UniProtKB-SubCell"/>
</dbReference>
<dbReference type="GO" id="GO:0045259">
    <property type="term" value="C:proton-transporting ATP synthase complex"/>
    <property type="evidence" value="ECO:0007669"/>
    <property type="project" value="UniProtKB-KW"/>
</dbReference>
<dbReference type="GO" id="GO:0046933">
    <property type="term" value="F:proton-transporting ATP synthase activity, rotational mechanism"/>
    <property type="evidence" value="ECO:0007669"/>
    <property type="project" value="UniProtKB-UniRule"/>
</dbReference>
<dbReference type="Gene3D" id="1.10.520.20">
    <property type="entry name" value="N-terminal domain of the delta subunit of the F1F0-ATP synthase"/>
    <property type="match status" value="1"/>
</dbReference>
<dbReference type="HAMAP" id="MF_01416">
    <property type="entry name" value="ATP_synth_delta_bact"/>
    <property type="match status" value="1"/>
</dbReference>
<dbReference type="InterPro" id="IPR026015">
    <property type="entry name" value="ATP_synth_OSCP/delta_N_sf"/>
</dbReference>
<dbReference type="InterPro" id="IPR000711">
    <property type="entry name" value="ATPase_OSCP/dsu"/>
</dbReference>
<dbReference type="NCBIfam" id="TIGR01145">
    <property type="entry name" value="ATP_synt_delta"/>
    <property type="match status" value="1"/>
</dbReference>
<dbReference type="NCBIfam" id="NF004402">
    <property type="entry name" value="PRK05758.2-2"/>
    <property type="match status" value="1"/>
</dbReference>
<dbReference type="NCBIfam" id="NF004406">
    <property type="entry name" value="PRK05758.3-2"/>
    <property type="match status" value="1"/>
</dbReference>
<dbReference type="PANTHER" id="PTHR11910">
    <property type="entry name" value="ATP SYNTHASE DELTA CHAIN"/>
    <property type="match status" value="1"/>
</dbReference>
<dbReference type="Pfam" id="PF00213">
    <property type="entry name" value="OSCP"/>
    <property type="match status" value="1"/>
</dbReference>
<dbReference type="PRINTS" id="PR00125">
    <property type="entry name" value="ATPASEDELTA"/>
</dbReference>
<dbReference type="SUPFAM" id="SSF47928">
    <property type="entry name" value="N-terminal domain of the delta subunit of the F1F0-ATP synthase"/>
    <property type="match status" value="1"/>
</dbReference>
<name>ATPD_PHEZH</name>